<reference key="1">
    <citation type="journal article" date="2007" name="Nat. Biotechnol.">
        <title>Genome sequencing and analysis of the versatile cell factory Aspergillus niger CBS 513.88.</title>
        <authorList>
            <person name="Pel H.J."/>
            <person name="de Winde J.H."/>
            <person name="Archer D.B."/>
            <person name="Dyer P.S."/>
            <person name="Hofmann G."/>
            <person name="Schaap P.J."/>
            <person name="Turner G."/>
            <person name="de Vries R.P."/>
            <person name="Albang R."/>
            <person name="Albermann K."/>
            <person name="Andersen M.R."/>
            <person name="Bendtsen J.D."/>
            <person name="Benen J.A.E."/>
            <person name="van den Berg M."/>
            <person name="Breestraat S."/>
            <person name="Caddick M.X."/>
            <person name="Contreras R."/>
            <person name="Cornell M."/>
            <person name="Coutinho P.M."/>
            <person name="Danchin E.G.J."/>
            <person name="Debets A.J.M."/>
            <person name="Dekker P."/>
            <person name="van Dijck P.W.M."/>
            <person name="van Dijk A."/>
            <person name="Dijkhuizen L."/>
            <person name="Driessen A.J.M."/>
            <person name="d'Enfert C."/>
            <person name="Geysens S."/>
            <person name="Goosen C."/>
            <person name="Groot G.S.P."/>
            <person name="de Groot P.W.J."/>
            <person name="Guillemette T."/>
            <person name="Henrissat B."/>
            <person name="Herweijer M."/>
            <person name="van den Hombergh J.P.T.W."/>
            <person name="van den Hondel C.A.M.J.J."/>
            <person name="van der Heijden R.T.J.M."/>
            <person name="van der Kaaij R.M."/>
            <person name="Klis F.M."/>
            <person name="Kools H.J."/>
            <person name="Kubicek C.P."/>
            <person name="van Kuyk P.A."/>
            <person name="Lauber J."/>
            <person name="Lu X."/>
            <person name="van der Maarel M.J.E.C."/>
            <person name="Meulenberg R."/>
            <person name="Menke H."/>
            <person name="Mortimer M.A."/>
            <person name="Nielsen J."/>
            <person name="Oliver S.G."/>
            <person name="Olsthoorn M."/>
            <person name="Pal K."/>
            <person name="van Peij N.N.M.E."/>
            <person name="Ram A.F.J."/>
            <person name="Rinas U."/>
            <person name="Roubos J.A."/>
            <person name="Sagt C.M.J."/>
            <person name="Schmoll M."/>
            <person name="Sun J."/>
            <person name="Ussery D."/>
            <person name="Varga J."/>
            <person name="Vervecken W."/>
            <person name="van de Vondervoort P.J.J."/>
            <person name="Wedler H."/>
            <person name="Woesten H.A.B."/>
            <person name="Zeng A.-P."/>
            <person name="van Ooyen A.J.J."/>
            <person name="Visser J."/>
            <person name="Stam H."/>
        </authorList>
    </citation>
    <scope>NUCLEOTIDE SEQUENCE [LARGE SCALE GENOMIC DNA]</scope>
    <source>
        <strain>ATCC MYA-4892 / CBS 513.88 / FGSC A1513</strain>
    </source>
</reference>
<sequence length="605" mass="67580">MREVNFSIPNVNKASVNITTTLYDRRALDCTSTLPLINSLNHLAYLTTSSARIRDILTVDGGIERLVCILKEGRSRDLMEMWKWSLAFQCVVNIGVRGSESVRTRVVEADMVPVIATILDNYIKVVEKARARADSESQRHSSRHHSKAAPISSDAPSRPVYVDQSTNTEQRPSRRQAPPPHIEIPPFYQDSHASDSNAMDITSSPRVPVTSPPERSTFGQDAHNLRSNDTRYAHAAHRYRVMQPLATALPPMDAADGFGLRPVRDTERLPSMLPGFQNGLASQPDSPTTPSGPAQLRSNTQVAPARPRPTLRQQQSASGESDDGNGEGSTLGDDPGSGETAEPIVGIQNRMEIDDDGDRQTVLEGVSNTHDLTVNDTSESQEAETFNITHRSTVDGSMINNDATRTNGALGLSPTQAPNTANSPAVVPSPYSLYVRDRSTTAVQGVLTTMPKDEDVLMSLQLLAYVSKYCNLRSYFQHSHLVPKLKVDRELQMLEDGVSPIEPAEEEDEYLLPDDVNIFPLVEKFTVRHHSKDMQYWACVVMRNLCRKDESRGGIRQCAYYKCGKWEEFQRQFAKCRRCRRTKYCSKDCQKAAWVYHRHWCHTTP</sequence>
<protein>
    <recommendedName>
        <fullName>MYND-type zinc finger protein samB</fullName>
    </recommendedName>
    <alternativeName>
        <fullName>Suppressor of anucleate metulae protein B</fullName>
    </alternativeName>
</protein>
<proteinExistence type="inferred from homology"/>
<evidence type="ECO:0000250" key="1"/>
<evidence type="ECO:0000255" key="2">
    <source>
        <dbReference type="PROSITE-ProRule" id="PRU00134"/>
    </source>
</evidence>
<evidence type="ECO:0000256" key="3">
    <source>
        <dbReference type="SAM" id="MobiDB-lite"/>
    </source>
</evidence>
<evidence type="ECO:0000305" key="4"/>
<accession>A2RA63</accession>
<dbReference type="EMBL" id="AM270398">
    <property type="protein sequence ID" value="CAK47278.1"/>
    <property type="molecule type" value="Genomic_DNA"/>
</dbReference>
<dbReference type="RefSeq" id="XP_001398665.1">
    <property type="nucleotide sequence ID" value="XM_001398628.2"/>
</dbReference>
<dbReference type="SMR" id="A2RA63"/>
<dbReference type="EnsemblFungi" id="CAK47278">
    <property type="protein sequence ID" value="CAK47278"/>
    <property type="gene ID" value="An18g02060"/>
</dbReference>
<dbReference type="GeneID" id="4989766"/>
<dbReference type="KEGG" id="ang:An18g02060"/>
<dbReference type="VEuPathDB" id="FungiDB:An18g02060"/>
<dbReference type="HOGENOM" id="CLU_014851_0_0_1"/>
<dbReference type="Proteomes" id="UP000006706">
    <property type="component" value="Chromosome 8L"/>
</dbReference>
<dbReference type="GO" id="GO:0005737">
    <property type="term" value="C:cytoplasm"/>
    <property type="evidence" value="ECO:0007669"/>
    <property type="project" value="UniProtKB-SubCell"/>
</dbReference>
<dbReference type="GO" id="GO:1990304">
    <property type="term" value="C:MUB1-RAD6-UBR2 ubiquitin ligase complex"/>
    <property type="evidence" value="ECO:0007669"/>
    <property type="project" value="TreeGrafter"/>
</dbReference>
<dbReference type="GO" id="GO:0008270">
    <property type="term" value="F:zinc ion binding"/>
    <property type="evidence" value="ECO:0007669"/>
    <property type="project" value="UniProtKB-KW"/>
</dbReference>
<dbReference type="GO" id="GO:0007163">
    <property type="term" value="P:establishment or maintenance of cell polarity"/>
    <property type="evidence" value="ECO:0007669"/>
    <property type="project" value="TreeGrafter"/>
</dbReference>
<dbReference type="GO" id="GO:1900735">
    <property type="term" value="P:positive regulation of flocculation"/>
    <property type="evidence" value="ECO:0007669"/>
    <property type="project" value="EnsemblFungi"/>
</dbReference>
<dbReference type="GO" id="GO:0030435">
    <property type="term" value="P:sporulation resulting in formation of a cellular spore"/>
    <property type="evidence" value="ECO:0007669"/>
    <property type="project" value="UniProtKB-KW"/>
</dbReference>
<dbReference type="GO" id="GO:0006511">
    <property type="term" value="P:ubiquitin-dependent protein catabolic process"/>
    <property type="evidence" value="ECO:0007669"/>
    <property type="project" value="TreeGrafter"/>
</dbReference>
<dbReference type="FunFam" id="6.10.140.2220:FF:000003">
    <property type="entry name" value="MYND-type zinc finger protein"/>
    <property type="match status" value="1"/>
</dbReference>
<dbReference type="Gene3D" id="6.10.140.2220">
    <property type="match status" value="1"/>
</dbReference>
<dbReference type="InterPro" id="IPR016024">
    <property type="entry name" value="ARM-type_fold"/>
</dbReference>
<dbReference type="InterPro" id="IPR051664">
    <property type="entry name" value="MYND-type_zinc_finger"/>
</dbReference>
<dbReference type="InterPro" id="IPR002893">
    <property type="entry name" value="Znf_MYND"/>
</dbReference>
<dbReference type="PANTHER" id="PTHR47442">
    <property type="entry name" value="MYND-TYPE ZINC FINGER PROTEIN MUB1"/>
    <property type="match status" value="1"/>
</dbReference>
<dbReference type="PANTHER" id="PTHR47442:SF1">
    <property type="entry name" value="MYND-TYPE ZINC FINGER PROTEIN MUB1"/>
    <property type="match status" value="1"/>
</dbReference>
<dbReference type="Pfam" id="PF01753">
    <property type="entry name" value="zf-MYND"/>
    <property type="match status" value="1"/>
</dbReference>
<dbReference type="SUPFAM" id="SSF48371">
    <property type="entry name" value="ARM repeat"/>
    <property type="match status" value="1"/>
</dbReference>
<dbReference type="SUPFAM" id="SSF144232">
    <property type="entry name" value="HIT/MYND zinc finger-like"/>
    <property type="match status" value="1"/>
</dbReference>
<dbReference type="PROSITE" id="PS01360">
    <property type="entry name" value="ZF_MYND_1"/>
    <property type="match status" value="1"/>
</dbReference>
<dbReference type="PROSITE" id="PS50865">
    <property type="entry name" value="ZF_MYND_2"/>
    <property type="match status" value="1"/>
</dbReference>
<keyword id="KW-0963">Cytoplasm</keyword>
<keyword id="KW-0479">Metal-binding</keyword>
<keyword id="KW-1185">Reference proteome</keyword>
<keyword id="KW-0749">Sporulation</keyword>
<keyword id="KW-0862">Zinc</keyword>
<keyword id="KW-0863">Zinc-finger</keyword>
<gene>
    <name type="primary">samB</name>
    <name type="ORF">An18g02060</name>
</gene>
<feature type="chain" id="PRO_0000393325" description="MYND-type zinc finger protein samB">
    <location>
        <begin position="1"/>
        <end position="605"/>
    </location>
</feature>
<feature type="zinc finger region" description="MYND-type; degenerate" evidence="2">
    <location>
        <begin position="560"/>
        <end position="601"/>
    </location>
</feature>
<feature type="region of interest" description="Disordered" evidence="3">
    <location>
        <begin position="133"/>
        <end position="227"/>
    </location>
</feature>
<feature type="region of interest" description="Disordered" evidence="3">
    <location>
        <begin position="268"/>
        <end position="342"/>
    </location>
</feature>
<feature type="compositionally biased region" description="Low complexity" evidence="3">
    <location>
        <begin position="202"/>
        <end position="216"/>
    </location>
</feature>
<feature type="compositionally biased region" description="Polar residues" evidence="3">
    <location>
        <begin position="279"/>
        <end position="302"/>
    </location>
</feature>
<feature type="binding site" evidence="2">
    <location>
        <position position="576"/>
    </location>
    <ligand>
        <name>Zn(2+)</name>
        <dbReference type="ChEBI" id="CHEBI:29105"/>
    </ligand>
</feature>
<feature type="binding site" evidence="2">
    <location>
        <position position="579"/>
    </location>
    <ligand>
        <name>Zn(2+)</name>
        <dbReference type="ChEBI" id="CHEBI:29105"/>
    </ligand>
</feature>
<feature type="binding site" evidence="2">
    <location>
        <position position="597"/>
    </location>
    <ligand>
        <name>Zn(2+)</name>
        <dbReference type="ChEBI" id="CHEBI:29105"/>
    </ligand>
</feature>
<feature type="binding site" evidence="2">
    <location>
        <position position="601"/>
    </location>
    <ligand>
        <name>Zn(2+)</name>
        <dbReference type="ChEBI" id="CHEBI:29105"/>
    </ligand>
</feature>
<comment type="function">
    <text evidence="1">Involved in determination of the onset of polarized growth and morphogenesis. Plays a role in the regulation of branching in hyphae and spore formation (By similarity).</text>
</comment>
<comment type="subcellular location">
    <subcellularLocation>
        <location evidence="1">Cytoplasm</location>
    </subcellularLocation>
</comment>
<comment type="similarity">
    <text evidence="4">Belongs to the MUB1/samB family.</text>
</comment>
<name>MUB1_ASPNC</name>
<organism>
    <name type="scientific">Aspergillus niger (strain ATCC MYA-4892 / CBS 513.88 / FGSC A1513)</name>
    <dbReference type="NCBI Taxonomy" id="425011"/>
    <lineage>
        <taxon>Eukaryota</taxon>
        <taxon>Fungi</taxon>
        <taxon>Dikarya</taxon>
        <taxon>Ascomycota</taxon>
        <taxon>Pezizomycotina</taxon>
        <taxon>Eurotiomycetes</taxon>
        <taxon>Eurotiomycetidae</taxon>
        <taxon>Eurotiales</taxon>
        <taxon>Aspergillaceae</taxon>
        <taxon>Aspergillus</taxon>
        <taxon>Aspergillus subgen. Circumdati</taxon>
    </lineage>
</organism>